<reference key="1">
    <citation type="journal article" date="1999" name="Nature">
        <title>Evidence for lateral gene transfer between Archaea and Bacteria from genome sequence of Thermotoga maritima.</title>
        <authorList>
            <person name="Nelson K.E."/>
            <person name="Clayton R.A."/>
            <person name="Gill S.R."/>
            <person name="Gwinn M.L."/>
            <person name="Dodson R.J."/>
            <person name="Haft D.H."/>
            <person name="Hickey E.K."/>
            <person name="Peterson J.D."/>
            <person name="Nelson W.C."/>
            <person name="Ketchum K.A."/>
            <person name="McDonald L.A."/>
            <person name="Utterback T.R."/>
            <person name="Malek J.A."/>
            <person name="Linher K.D."/>
            <person name="Garrett M.M."/>
            <person name="Stewart A.M."/>
            <person name="Cotton M.D."/>
            <person name="Pratt M.S."/>
            <person name="Phillips C.A."/>
            <person name="Richardson D.L."/>
            <person name="Heidelberg J.F."/>
            <person name="Sutton G.G."/>
            <person name="Fleischmann R.D."/>
            <person name="Eisen J.A."/>
            <person name="White O."/>
            <person name="Salzberg S.L."/>
            <person name="Smith H.O."/>
            <person name="Venter J.C."/>
            <person name="Fraser C.M."/>
        </authorList>
    </citation>
    <scope>NUCLEOTIDE SEQUENCE [LARGE SCALE GENOMIC DNA]</scope>
    <source>
        <strain>ATCC 43589 / DSM 3109 / JCM 10099 / NBRC 100826 / MSB8</strain>
    </source>
</reference>
<reference key="2">
    <citation type="journal article" date="2004" name="Mol. Cell">
        <title>Structure and function of an unusual family of protein phosphatases: the bacterial chemotaxis proteins CheC and CheX.</title>
        <authorList>
            <person name="Park S.-Y."/>
            <person name="Chao X."/>
            <person name="Gonzalez-Bonet G."/>
            <person name="Beel B.D."/>
            <person name="Bilwes A.M."/>
            <person name="Crane B.R."/>
        </authorList>
    </citation>
    <scope>X-RAY CRYSTALLOGRAPHY (2.48 ANGSTROMS)</scope>
    <scope>SUBUNIT</scope>
</reference>
<reference key="3">
    <citation type="submission" date="2005-01" db="PDB data bank">
        <title>The crystal structure of the protein CheX from Thermotoga maritima.</title>
        <authorList>
            <consortium name="Midwest center for structural genomics (MCSG)"/>
        </authorList>
    </citation>
    <scope>X-RAY CRYSTALLOGRAPHY (2.4 ANGSTROMS)</scope>
</reference>
<feature type="chain" id="PRO_0000250998" description="CheY-P phosphatase CheX">
    <location>
        <begin position="1"/>
        <end position="155"/>
    </location>
</feature>
<feature type="helix" evidence="3">
    <location>
        <begin position="3"/>
        <end position="19"/>
    </location>
</feature>
<feature type="strand" evidence="3">
    <location>
        <begin position="34"/>
        <end position="36"/>
    </location>
</feature>
<feature type="strand" evidence="3">
    <location>
        <begin position="40"/>
        <end position="51"/>
    </location>
</feature>
<feature type="strand" evidence="3">
    <location>
        <begin position="54"/>
        <end position="60"/>
    </location>
</feature>
<feature type="helix" evidence="3">
    <location>
        <begin position="62"/>
        <end position="72"/>
    </location>
</feature>
<feature type="turn" evidence="3">
    <location>
        <begin position="73"/>
        <end position="75"/>
    </location>
</feature>
<feature type="helix" evidence="3">
    <location>
        <begin position="83"/>
        <end position="105"/>
    </location>
</feature>
<feature type="strand" evidence="3">
    <location>
        <begin position="111"/>
        <end position="113"/>
    </location>
</feature>
<feature type="strand" evidence="3">
    <location>
        <begin position="117"/>
        <end position="120"/>
    </location>
</feature>
<feature type="strand" evidence="3">
    <location>
        <begin position="125"/>
        <end position="127"/>
    </location>
</feature>
<feature type="strand" evidence="3">
    <location>
        <begin position="130"/>
        <end position="141"/>
    </location>
</feature>
<feature type="strand" evidence="3">
    <location>
        <begin position="145"/>
        <end position="151"/>
    </location>
</feature>
<sequence>MDARIVNALIGSVYETIRDVLGIEPKTGKPSTVSHIEIPHSLVTVIGITGGIEGSLIYSFSSETALKVVSAMMGGMEYNQLDELALSAIGELGNMTAGKLAMKLEHLGKHVDITPPTVVSGRDLKIKSFGVILKLPISVFSEEDFDLHLSVKSGG</sequence>
<organism>
    <name type="scientific">Thermotoga maritima (strain ATCC 43589 / DSM 3109 / JCM 10099 / NBRC 100826 / MSB8)</name>
    <dbReference type="NCBI Taxonomy" id="243274"/>
    <lineage>
        <taxon>Bacteria</taxon>
        <taxon>Thermotogati</taxon>
        <taxon>Thermotogota</taxon>
        <taxon>Thermotogae</taxon>
        <taxon>Thermotogales</taxon>
        <taxon>Thermotogaceae</taxon>
        <taxon>Thermotoga</taxon>
    </lineage>
</organism>
<comment type="function">
    <text>Involved in restoring normal CheY-P levels by dephosphorylating CheY-P. It has a greater activity than CheC.</text>
</comment>
<comment type="subunit">
    <text evidence="1">Homodimer.</text>
</comment>
<comment type="similarity">
    <text evidence="2">Belongs to the CheC family.</text>
</comment>
<proteinExistence type="evidence at protein level"/>
<accession>Q9X1V3</accession>
<keyword id="KW-0002">3D-structure</keyword>
<keyword id="KW-0145">Chemotaxis</keyword>
<keyword id="KW-0378">Hydrolase</keyword>
<keyword id="KW-1185">Reference proteome</keyword>
<name>CHEX_THEMA</name>
<gene>
    <name type="primary">cheX</name>
    <name type="ordered locus">TM_1618</name>
</gene>
<evidence type="ECO:0000269" key="1">
    <source>
    </source>
</evidence>
<evidence type="ECO:0000305" key="2"/>
<evidence type="ECO:0007829" key="3">
    <source>
        <dbReference type="PDB" id="1SQU"/>
    </source>
</evidence>
<dbReference type="EC" id="3.-.-.-"/>
<dbReference type="EMBL" id="AE000512">
    <property type="protein sequence ID" value="AAD36685.1"/>
    <property type="molecule type" value="Genomic_DNA"/>
</dbReference>
<dbReference type="PIR" id="D72232">
    <property type="entry name" value="D72232"/>
</dbReference>
<dbReference type="RefSeq" id="NP_229418.1">
    <property type="nucleotide sequence ID" value="NC_000853.1"/>
</dbReference>
<dbReference type="RefSeq" id="WP_004082082.1">
    <property type="nucleotide sequence ID" value="NZ_CP011107.1"/>
</dbReference>
<dbReference type="PDB" id="1SQU">
    <property type="method" value="X-ray"/>
    <property type="resolution" value="2.40 A"/>
    <property type="chains" value="A/B=1-155"/>
</dbReference>
<dbReference type="PDB" id="1XKO">
    <property type="method" value="X-ray"/>
    <property type="resolution" value="2.48 A"/>
    <property type="chains" value="A/B=1-155"/>
</dbReference>
<dbReference type="PDBsum" id="1SQU"/>
<dbReference type="PDBsum" id="1XKO"/>
<dbReference type="SMR" id="Q9X1V3"/>
<dbReference type="STRING" id="243274.TM_1618"/>
<dbReference type="PaxDb" id="243274-THEMA_06155"/>
<dbReference type="EnsemblBacteria" id="AAD36685">
    <property type="protein sequence ID" value="AAD36685"/>
    <property type="gene ID" value="TM_1618"/>
</dbReference>
<dbReference type="KEGG" id="tma:TM1618"/>
<dbReference type="KEGG" id="tmi:THEMA_06155"/>
<dbReference type="KEGG" id="tmm:Tmari_1627"/>
<dbReference type="KEGG" id="tmw:THMA_1659"/>
<dbReference type="eggNOG" id="COG1406">
    <property type="taxonomic scope" value="Bacteria"/>
</dbReference>
<dbReference type="InParanoid" id="Q9X1V3"/>
<dbReference type="OrthoDB" id="9788100at2"/>
<dbReference type="EvolutionaryTrace" id="Q9X1V3"/>
<dbReference type="Proteomes" id="UP000008183">
    <property type="component" value="Chromosome"/>
</dbReference>
<dbReference type="GO" id="GO:0016787">
    <property type="term" value="F:hydrolase activity"/>
    <property type="evidence" value="ECO:0007669"/>
    <property type="project" value="UniProtKB-KW"/>
</dbReference>
<dbReference type="GO" id="GO:0006935">
    <property type="term" value="P:chemotaxis"/>
    <property type="evidence" value="ECO:0007669"/>
    <property type="project" value="UniProtKB-KW"/>
</dbReference>
<dbReference type="CDD" id="cd16353">
    <property type="entry name" value="CheC_CheX_FliY"/>
    <property type="match status" value="1"/>
</dbReference>
<dbReference type="Gene3D" id="3.40.1550.10">
    <property type="entry name" value="CheC-like"/>
    <property type="match status" value="1"/>
</dbReference>
<dbReference type="InterPro" id="IPR028976">
    <property type="entry name" value="CheC-like_sf"/>
</dbReference>
<dbReference type="InterPro" id="IPR038756">
    <property type="entry name" value="CheX-like"/>
</dbReference>
<dbReference type="InterPro" id="IPR028051">
    <property type="entry name" value="CheX-like_dom"/>
</dbReference>
<dbReference type="PANTHER" id="PTHR39452">
    <property type="entry name" value="CHEY-P PHOSPHATASE CHEX"/>
    <property type="match status" value="1"/>
</dbReference>
<dbReference type="PANTHER" id="PTHR39452:SF1">
    <property type="entry name" value="CHEY-P PHOSPHATASE CHEX"/>
    <property type="match status" value="1"/>
</dbReference>
<dbReference type="Pfam" id="PF13690">
    <property type="entry name" value="CheX"/>
    <property type="match status" value="1"/>
</dbReference>
<dbReference type="SUPFAM" id="SSF103039">
    <property type="entry name" value="CheC-like"/>
    <property type="match status" value="1"/>
</dbReference>
<protein>
    <recommendedName>
        <fullName>CheY-P phosphatase CheX</fullName>
        <ecNumber>3.-.-.-</ecNumber>
    </recommendedName>
</protein>